<proteinExistence type="inferred from homology"/>
<dbReference type="EC" id="3.1.-.-" evidence="1"/>
<dbReference type="EMBL" id="BA000016">
    <property type="protein sequence ID" value="BAB81378.1"/>
    <property type="status" value="ALT_INIT"/>
    <property type="molecule type" value="Genomic_DNA"/>
</dbReference>
<dbReference type="RefSeq" id="WP_003459753.1">
    <property type="nucleotide sequence ID" value="NC_003366.1"/>
</dbReference>
<dbReference type="STRING" id="195102.gene:10490936"/>
<dbReference type="GeneID" id="93001790"/>
<dbReference type="KEGG" id="cpe:CPE1672"/>
<dbReference type="HOGENOM" id="CLU_028328_1_0_9"/>
<dbReference type="Proteomes" id="UP000000818">
    <property type="component" value="Chromosome"/>
</dbReference>
<dbReference type="GO" id="GO:0005886">
    <property type="term" value="C:plasma membrane"/>
    <property type="evidence" value="ECO:0007669"/>
    <property type="project" value="UniProtKB-SubCell"/>
</dbReference>
<dbReference type="GO" id="GO:0003723">
    <property type="term" value="F:RNA binding"/>
    <property type="evidence" value="ECO:0007669"/>
    <property type="project" value="UniProtKB-UniRule"/>
</dbReference>
<dbReference type="GO" id="GO:0004521">
    <property type="term" value="F:RNA endonuclease activity"/>
    <property type="evidence" value="ECO:0007669"/>
    <property type="project" value="UniProtKB-UniRule"/>
</dbReference>
<dbReference type="GO" id="GO:0006402">
    <property type="term" value="P:mRNA catabolic process"/>
    <property type="evidence" value="ECO:0007669"/>
    <property type="project" value="UniProtKB-UniRule"/>
</dbReference>
<dbReference type="CDD" id="cd00077">
    <property type="entry name" value="HDc"/>
    <property type="match status" value="1"/>
</dbReference>
<dbReference type="CDD" id="cd22431">
    <property type="entry name" value="KH-I_RNaseY"/>
    <property type="match status" value="1"/>
</dbReference>
<dbReference type="FunFam" id="1.10.3210.10:FF:000003">
    <property type="entry name" value="Ribonuclease Y"/>
    <property type="match status" value="1"/>
</dbReference>
<dbReference type="FunFam" id="3.30.1370.10:FF:000006">
    <property type="entry name" value="Ribonuclease Y"/>
    <property type="match status" value="1"/>
</dbReference>
<dbReference type="Gene3D" id="1.10.3210.10">
    <property type="entry name" value="Hypothetical protein af1432"/>
    <property type="match status" value="1"/>
</dbReference>
<dbReference type="Gene3D" id="3.30.1370.10">
    <property type="entry name" value="K Homology domain, type 1"/>
    <property type="match status" value="1"/>
</dbReference>
<dbReference type="HAMAP" id="MF_00335">
    <property type="entry name" value="RNase_Y"/>
    <property type="match status" value="1"/>
</dbReference>
<dbReference type="InterPro" id="IPR003607">
    <property type="entry name" value="HD/PDEase_dom"/>
</dbReference>
<dbReference type="InterPro" id="IPR006674">
    <property type="entry name" value="HD_domain"/>
</dbReference>
<dbReference type="InterPro" id="IPR006675">
    <property type="entry name" value="HDIG_dom"/>
</dbReference>
<dbReference type="InterPro" id="IPR004087">
    <property type="entry name" value="KH_dom"/>
</dbReference>
<dbReference type="InterPro" id="IPR004088">
    <property type="entry name" value="KH_dom_type_1"/>
</dbReference>
<dbReference type="InterPro" id="IPR036612">
    <property type="entry name" value="KH_dom_type_1_sf"/>
</dbReference>
<dbReference type="InterPro" id="IPR017705">
    <property type="entry name" value="Ribonuclease_Y"/>
</dbReference>
<dbReference type="InterPro" id="IPR022711">
    <property type="entry name" value="RNase_Y_N"/>
</dbReference>
<dbReference type="NCBIfam" id="TIGR00277">
    <property type="entry name" value="HDIG"/>
    <property type="match status" value="1"/>
</dbReference>
<dbReference type="NCBIfam" id="TIGR03319">
    <property type="entry name" value="RNase_Y"/>
    <property type="match status" value="1"/>
</dbReference>
<dbReference type="PANTHER" id="PTHR12826">
    <property type="entry name" value="RIBONUCLEASE Y"/>
    <property type="match status" value="1"/>
</dbReference>
<dbReference type="PANTHER" id="PTHR12826:SF15">
    <property type="entry name" value="RIBONUCLEASE Y"/>
    <property type="match status" value="1"/>
</dbReference>
<dbReference type="Pfam" id="PF01966">
    <property type="entry name" value="HD"/>
    <property type="match status" value="1"/>
</dbReference>
<dbReference type="Pfam" id="PF00013">
    <property type="entry name" value="KH_1"/>
    <property type="match status" value="1"/>
</dbReference>
<dbReference type="Pfam" id="PF12072">
    <property type="entry name" value="RNase_Y_N"/>
    <property type="match status" value="1"/>
</dbReference>
<dbReference type="SMART" id="SM00471">
    <property type="entry name" value="HDc"/>
    <property type="match status" value="1"/>
</dbReference>
<dbReference type="SMART" id="SM00322">
    <property type="entry name" value="KH"/>
    <property type="match status" value="1"/>
</dbReference>
<dbReference type="SUPFAM" id="SSF54791">
    <property type="entry name" value="Eukaryotic type KH-domain (KH-domain type I)"/>
    <property type="match status" value="1"/>
</dbReference>
<dbReference type="SUPFAM" id="SSF109604">
    <property type="entry name" value="HD-domain/PDEase-like"/>
    <property type="match status" value="1"/>
</dbReference>
<dbReference type="PROSITE" id="PS51831">
    <property type="entry name" value="HD"/>
    <property type="match status" value="1"/>
</dbReference>
<dbReference type="PROSITE" id="PS50084">
    <property type="entry name" value="KH_TYPE_1"/>
    <property type="match status" value="1"/>
</dbReference>
<name>RNY_CLOPE</name>
<keyword id="KW-1003">Cell membrane</keyword>
<keyword id="KW-0255">Endonuclease</keyword>
<keyword id="KW-0378">Hydrolase</keyword>
<keyword id="KW-0472">Membrane</keyword>
<keyword id="KW-0540">Nuclease</keyword>
<keyword id="KW-1185">Reference proteome</keyword>
<keyword id="KW-0694">RNA-binding</keyword>
<keyword id="KW-0812">Transmembrane</keyword>
<keyword id="KW-1133">Transmembrane helix</keyword>
<organism>
    <name type="scientific">Clostridium perfringens (strain 13 / Type A)</name>
    <dbReference type="NCBI Taxonomy" id="195102"/>
    <lineage>
        <taxon>Bacteria</taxon>
        <taxon>Bacillati</taxon>
        <taxon>Bacillota</taxon>
        <taxon>Clostridia</taxon>
        <taxon>Eubacteriales</taxon>
        <taxon>Clostridiaceae</taxon>
        <taxon>Clostridium</taxon>
    </lineage>
</organism>
<comment type="function">
    <text evidence="1">Endoribonuclease that initiates mRNA decay.</text>
</comment>
<comment type="subcellular location">
    <subcellularLocation>
        <location evidence="1">Cell membrane</location>
        <topology evidence="1">Single-pass membrane protein</topology>
    </subcellularLocation>
</comment>
<comment type="similarity">
    <text evidence="1">Belongs to the RNase Y family.</text>
</comment>
<comment type="sequence caution" evidence="3">
    <conflict type="erroneous initiation">
        <sequence resource="EMBL-CDS" id="BAB81378"/>
    </conflict>
</comment>
<sequence length="511" mass="57681">MVVGILIGIIILGVVGFIQYTLIQKASKNRVESLEKEASLTLEEAKREAESTKKEAILEAKEEVHKLRADLDKETRDRRNEIQRFERRLIQREESLDKKGEMLEKREDSINKKSIEIQELEERVQNLYGEQRAELERISNLSSEDARTLLLDEVRREIKHESAMLIKELETKAKEEADKKSREIITTAIQRCAADHVSETTVHVVALPNDEMKGRIIGREGRNIRTLETLTGVDLIIDDTPEAVILSSFDPIRREVARIALEKLIVDGRIHPARIEEMVERAIKDVENDIKEEGEQATFETGVHGLHPEIIKLLGRLKYRTSYGQNVLKHSIEVSYLAGLMASELGLDVNLARRAGLLHDIGKGVDQEYEGPHAVIGGELAKKYHESPAVVNAIAAHHGDTEMQTLEAVLVQAADAISAARPGARRETLEAYIKRLEKLEEIATSYEGVEKSYAIQAGREIRIMVKPDQVDDAGAIEMARNIVKKIEEQLEYPGQIKINVIRETRAVDYAK</sequence>
<gene>
    <name evidence="1" type="primary">rny</name>
    <name type="ordered locus">CPE1672</name>
</gene>
<reference key="1">
    <citation type="journal article" date="2002" name="Proc. Natl. Acad. Sci. U.S.A.">
        <title>Complete genome sequence of Clostridium perfringens, an anaerobic flesh-eater.</title>
        <authorList>
            <person name="Shimizu T."/>
            <person name="Ohtani K."/>
            <person name="Hirakawa H."/>
            <person name="Ohshima K."/>
            <person name="Yamashita A."/>
            <person name="Shiba T."/>
            <person name="Ogasawara N."/>
            <person name="Hattori M."/>
            <person name="Kuhara S."/>
            <person name="Hayashi H."/>
        </authorList>
    </citation>
    <scope>NUCLEOTIDE SEQUENCE [LARGE SCALE GENOMIC DNA]</scope>
    <source>
        <strain>13 / Type A</strain>
    </source>
</reference>
<evidence type="ECO:0000255" key="1">
    <source>
        <dbReference type="HAMAP-Rule" id="MF_00335"/>
    </source>
</evidence>
<evidence type="ECO:0000255" key="2">
    <source>
        <dbReference type="PROSITE-ProRule" id="PRU01175"/>
    </source>
</evidence>
<evidence type="ECO:0000305" key="3"/>
<accession>Q8XJT1</accession>
<feature type="chain" id="PRO_0000163771" description="Ribonuclease Y">
    <location>
        <begin position="1"/>
        <end position="511"/>
    </location>
</feature>
<feature type="transmembrane region" description="Helical" evidence="1">
    <location>
        <begin position="3"/>
        <end position="23"/>
    </location>
</feature>
<feature type="domain" description="KH" evidence="1">
    <location>
        <begin position="201"/>
        <end position="286"/>
    </location>
</feature>
<feature type="domain" description="HD" evidence="2">
    <location>
        <begin position="327"/>
        <end position="420"/>
    </location>
</feature>
<protein>
    <recommendedName>
        <fullName evidence="1">Ribonuclease Y</fullName>
        <shortName evidence="1">RNase Y</shortName>
        <ecNumber evidence="1">3.1.-.-</ecNumber>
    </recommendedName>
</protein>